<keyword id="KW-0378">Hydrolase</keyword>
<keyword id="KW-0441">Lipid A biosynthesis</keyword>
<keyword id="KW-0444">Lipid biosynthesis</keyword>
<keyword id="KW-0443">Lipid metabolism</keyword>
<keyword id="KW-0479">Metal-binding</keyword>
<keyword id="KW-1185">Reference proteome</keyword>
<keyword id="KW-0862">Zinc</keyword>
<organism>
    <name type="scientific">Photobacterium profundum (strain SS9)</name>
    <dbReference type="NCBI Taxonomy" id="298386"/>
    <lineage>
        <taxon>Bacteria</taxon>
        <taxon>Pseudomonadati</taxon>
        <taxon>Pseudomonadota</taxon>
        <taxon>Gammaproteobacteria</taxon>
        <taxon>Vibrionales</taxon>
        <taxon>Vibrionaceae</taxon>
        <taxon>Photobacterium</taxon>
    </lineage>
</organism>
<reference key="1">
    <citation type="journal article" date="2005" name="Science">
        <title>Life at depth: Photobacterium profundum genome sequence and expression analysis.</title>
        <authorList>
            <person name="Vezzi A."/>
            <person name="Campanaro S."/>
            <person name="D'Angelo M."/>
            <person name="Simonato F."/>
            <person name="Vitulo N."/>
            <person name="Lauro F.M."/>
            <person name="Cestaro A."/>
            <person name="Malacrida G."/>
            <person name="Simionati B."/>
            <person name="Cannata N."/>
            <person name="Romualdi C."/>
            <person name="Bartlett D.H."/>
            <person name="Valle G."/>
        </authorList>
    </citation>
    <scope>NUCLEOTIDE SEQUENCE [LARGE SCALE GENOMIC DNA]</scope>
    <source>
        <strain>ATCC BAA-1253 / SS9</strain>
    </source>
</reference>
<dbReference type="EC" id="3.5.1.108" evidence="1"/>
<dbReference type="EMBL" id="CR378673">
    <property type="protein sequence ID" value="CAG21516.1"/>
    <property type="status" value="ALT_INIT"/>
    <property type="molecule type" value="Genomic_DNA"/>
</dbReference>
<dbReference type="RefSeq" id="WP_011219770.1">
    <property type="nucleotide sequence ID" value="NC_006370.1"/>
</dbReference>
<dbReference type="SMR" id="Q6LMG1"/>
<dbReference type="STRING" id="298386.PBPRA3210"/>
<dbReference type="KEGG" id="ppr:PBPRA3210"/>
<dbReference type="eggNOG" id="COG0774">
    <property type="taxonomic scope" value="Bacteria"/>
</dbReference>
<dbReference type="HOGENOM" id="CLU_046528_1_0_6"/>
<dbReference type="UniPathway" id="UPA00359">
    <property type="reaction ID" value="UER00478"/>
</dbReference>
<dbReference type="Proteomes" id="UP000000593">
    <property type="component" value="Chromosome 1"/>
</dbReference>
<dbReference type="GO" id="GO:0016020">
    <property type="term" value="C:membrane"/>
    <property type="evidence" value="ECO:0007669"/>
    <property type="project" value="GOC"/>
</dbReference>
<dbReference type="GO" id="GO:0046872">
    <property type="term" value="F:metal ion binding"/>
    <property type="evidence" value="ECO:0007669"/>
    <property type="project" value="UniProtKB-KW"/>
</dbReference>
<dbReference type="GO" id="GO:0103117">
    <property type="term" value="F:UDP-3-O-acyl-N-acetylglucosamine deacetylase activity"/>
    <property type="evidence" value="ECO:0007669"/>
    <property type="project" value="UniProtKB-UniRule"/>
</dbReference>
<dbReference type="GO" id="GO:0009245">
    <property type="term" value="P:lipid A biosynthetic process"/>
    <property type="evidence" value="ECO:0007669"/>
    <property type="project" value="UniProtKB-UniRule"/>
</dbReference>
<dbReference type="FunFam" id="3.30.1700.10:FF:000001">
    <property type="entry name" value="UDP-3-O-acyl-N-acetylglucosamine deacetylase"/>
    <property type="match status" value="1"/>
</dbReference>
<dbReference type="FunFam" id="3.30.230.20:FF:000001">
    <property type="entry name" value="UDP-3-O-acyl-N-acetylglucosamine deacetylase"/>
    <property type="match status" value="1"/>
</dbReference>
<dbReference type="Gene3D" id="3.30.230.20">
    <property type="entry name" value="lpxc deacetylase, domain 1"/>
    <property type="match status" value="1"/>
</dbReference>
<dbReference type="Gene3D" id="3.30.1700.10">
    <property type="entry name" value="lpxc deacetylase, domain 2"/>
    <property type="match status" value="1"/>
</dbReference>
<dbReference type="HAMAP" id="MF_00388">
    <property type="entry name" value="LpxC"/>
    <property type="match status" value="1"/>
</dbReference>
<dbReference type="InterPro" id="IPR020568">
    <property type="entry name" value="Ribosomal_Su5_D2-typ_SF"/>
</dbReference>
<dbReference type="InterPro" id="IPR004463">
    <property type="entry name" value="UDP-acyl_GlcNac_deAcase"/>
</dbReference>
<dbReference type="InterPro" id="IPR011334">
    <property type="entry name" value="UDP-acyl_GlcNac_deAcase_C"/>
</dbReference>
<dbReference type="InterPro" id="IPR015870">
    <property type="entry name" value="UDP-acyl_N-AcGlcN_deAcase_N"/>
</dbReference>
<dbReference type="NCBIfam" id="TIGR00325">
    <property type="entry name" value="lpxC"/>
    <property type="match status" value="1"/>
</dbReference>
<dbReference type="PANTHER" id="PTHR33694">
    <property type="entry name" value="UDP-3-O-ACYL-N-ACETYLGLUCOSAMINE DEACETYLASE 1, MITOCHONDRIAL-RELATED"/>
    <property type="match status" value="1"/>
</dbReference>
<dbReference type="PANTHER" id="PTHR33694:SF1">
    <property type="entry name" value="UDP-3-O-ACYL-N-ACETYLGLUCOSAMINE DEACETYLASE 1, MITOCHONDRIAL-RELATED"/>
    <property type="match status" value="1"/>
</dbReference>
<dbReference type="Pfam" id="PF03331">
    <property type="entry name" value="LpxC"/>
    <property type="match status" value="1"/>
</dbReference>
<dbReference type="SUPFAM" id="SSF54211">
    <property type="entry name" value="Ribosomal protein S5 domain 2-like"/>
    <property type="match status" value="2"/>
</dbReference>
<sequence>MIRQRTLKSIVQTTGVGLHSGRKVTLILRPAAANTGVIYRRTDLNPPVDFPADANSVRDTMLCTALVNEDGVRISTVEHLNAALAGMGIDNVIIEVDAPEIPIMDGSASPFIYLLQSAGIDTLNAPKRFLRIKKPVRIEDGDKWAELVPFNGFRLDFTIDFNHPAIDADQQRLVLDFSSQSFIKDISRARTFGFMRDIEYLQSQNLALGGSFDNAIVLDDYRILNDDGLRFDNELVTHKVLDAIGDLYMCGHNIIGEMRAYKSGHALNNQLLRAVLADQEAYEWATFQAEEVPVTFAQPGMVLA</sequence>
<name>LPXC_PHOPR</name>
<evidence type="ECO:0000255" key="1">
    <source>
        <dbReference type="HAMAP-Rule" id="MF_00388"/>
    </source>
</evidence>
<evidence type="ECO:0000305" key="2"/>
<proteinExistence type="inferred from homology"/>
<feature type="chain" id="PRO_0000191944" description="UDP-3-O-acyl-N-acetylglucosamine deacetylase">
    <location>
        <begin position="1"/>
        <end position="304"/>
    </location>
</feature>
<feature type="active site" description="Proton donor" evidence="1">
    <location>
        <position position="265"/>
    </location>
</feature>
<feature type="binding site" evidence="1">
    <location>
        <position position="79"/>
    </location>
    <ligand>
        <name>Zn(2+)</name>
        <dbReference type="ChEBI" id="CHEBI:29105"/>
    </ligand>
</feature>
<feature type="binding site" evidence="1">
    <location>
        <position position="238"/>
    </location>
    <ligand>
        <name>Zn(2+)</name>
        <dbReference type="ChEBI" id="CHEBI:29105"/>
    </ligand>
</feature>
<feature type="binding site" evidence="1">
    <location>
        <position position="242"/>
    </location>
    <ligand>
        <name>Zn(2+)</name>
        <dbReference type="ChEBI" id="CHEBI:29105"/>
    </ligand>
</feature>
<gene>
    <name evidence="1" type="primary">lpxC</name>
    <name type="ordered locus">PBPRA3210</name>
</gene>
<comment type="function">
    <text evidence="1">Catalyzes the hydrolysis of UDP-3-O-myristoyl-N-acetylglucosamine to form UDP-3-O-myristoylglucosamine and acetate, the committed step in lipid A biosynthesis.</text>
</comment>
<comment type="catalytic activity">
    <reaction evidence="1">
        <text>a UDP-3-O-[(3R)-3-hydroxyacyl]-N-acetyl-alpha-D-glucosamine + H2O = a UDP-3-O-[(3R)-3-hydroxyacyl]-alpha-D-glucosamine + acetate</text>
        <dbReference type="Rhea" id="RHEA:67816"/>
        <dbReference type="ChEBI" id="CHEBI:15377"/>
        <dbReference type="ChEBI" id="CHEBI:30089"/>
        <dbReference type="ChEBI" id="CHEBI:137740"/>
        <dbReference type="ChEBI" id="CHEBI:173225"/>
        <dbReference type="EC" id="3.5.1.108"/>
    </reaction>
</comment>
<comment type="cofactor">
    <cofactor evidence="1">
        <name>Zn(2+)</name>
        <dbReference type="ChEBI" id="CHEBI:29105"/>
    </cofactor>
</comment>
<comment type="pathway">
    <text evidence="1">Glycolipid biosynthesis; lipid IV(A) biosynthesis; lipid IV(A) from (3R)-3-hydroxytetradecanoyl-[acyl-carrier-protein] and UDP-N-acetyl-alpha-D-glucosamine: step 2/6.</text>
</comment>
<comment type="similarity">
    <text evidence="1">Belongs to the LpxC family.</text>
</comment>
<comment type="sequence caution" evidence="2">
    <conflict type="erroneous initiation">
        <sequence resource="EMBL-CDS" id="CAG21516"/>
    </conflict>
</comment>
<accession>Q6LMG1</accession>
<protein>
    <recommendedName>
        <fullName evidence="1">UDP-3-O-acyl-N-acetylglucosamine deacetylase</fullName>
        <shortName evidence="1">UDP-3-O-acyl-GlcNAc deacetylase</shortName>
        <ecNumber evidence="1">3.5.1.108</ecNumber>
    </recommendedName>
    <alternativeName>
        <fullName evidence="1">UDP-3-O-[R-3-hydroxymyristoyl]-N-acetylglucosamine deacetylase</fullName>
    </alternativeName>
</protein>